<sequence length="233" mass="26216">MGQKVSPNVLRLGIVRDWENRWYAEKDQYVKWLDQDIKIRTALFKLLKDAAVSKIDIERTTKDLTLFIKTARPAIVLGQEGKNIEKIVLAVRKTVKNKKLIVNVRVIEIKSPDADATLVARWIGEQISNRASFRTVQKLAIKKALKAGAKGIKTAVSGRLGGVEMARTEGYLEGSVPLSTLRNNIDYALYEAPTTYGQIGVKVWINHGEVFKKERMNNSQIMAKPRTNKGGKR</sequence>
<evidence type="ECO:0000250" key="1"/>
<evidence type="ECO:0000255" key="2">
    <source>
        <dbReference type="HAMAP-Rule" id="MF_01309"/>
    </source>
</evidence>
<evidence type="ECO:0000305" key="3"/>
<comment type="function">
    <text evidence="2">Binds the lower part of the 30S subunit head. Binds mRNA in the 70S ribosome, positioning it for translation.</text>
</comment>
<comment type="subunit">
    <text evidence="2">Part of the 30S ribosomal subunit. Forms a tight complex with proteins S10 and S14.</text>
</comment>
<comment type="similarity">
    <text evidence="2">Belongs to the universal ribosomal protein uS3 family.</text>
</comment>
<feature type="initiator methionine" description="Removed" evidence="1">
    <location>
        <position position="1"/>
    </location>
</feature>
<feature type="chain" id="PRO_0000130148" description="Small ribosomal subunit protein uS3">
    <location>
        <begin position="2"/>
        <end position="233"/>
    </location>
</feature>
<feature type="domain" description="KH type-2" evidence="2">
    <location>
        <begin position="39"/>
        <end position="108"/>
    </location>
</feature>
<feature type="sequence conflict" description="In Ref. 1; CAA29710." evidence="3" ref="1">
    <original>DA</original>
    <variation>RS</variation>
    <location>
        <begin position="115"/>
        <end position="116"/>
    </location>
</feature>
<feature type="sequence conflict" description="In Ref. 2; CAA83692." evidence="3" ref="2">
    <original>A</original>
    <variation>V</variation>
    <location>
        <position position="120"/>
    </location>
</feature>
<feature type="sequence conflict" description="In Ref. 1; CAA29710." evidence="3" ref="1">
    <original>G</original>
    <variation>C</variation>
    <location>
        <position position="174"/>
    </location>
</feature>
<proteinExistence type="inferred from homology"/>
<dbReference type="EMBL" id="X06414">
    <property type="protein sequence ID" value="CAA29710.1"/>
    <property type="molecule type" value="Genomic_DNA"/>
</dbReference>
<dbReference type="EMBL" id="Z33011">
    <property type="protein sequence ID" value="CAA83692.1"/>
    <property type="molecule type" value="Genomic_DNA"/>
</dbReference>
<dbReference type="EMBL" id="CP000123">
    <property type="protein sequence ID" value="ABC01593.1"/>
    <property type="molecule type" value="Genomic_DNA"/>
</dbReference>
<dbReference type="EMBL" id="K02973">
    <property type="protein sequence ID" value="AAA25438.1"/>
    <property type="molecule type" value="Genomic_DNA"/>
</dbReference>
<dbReference type="PIR" id="S02837">
    <property type="entry name" value="R3YM3C"/>
</dbReference>
<dbReference type="RefSeq" id="WP_011166907.1">
    <property type="nucleotide sequence ID" value="NC_007633.1"/>
</dbReference>
<dbReference type="SMR" id="P02353"/>
<dbReference type="GeneID" id="93426139"/>
<dbReference type="KEGG" id="mcp:MCAP_0690"/>
<dbReference type="HOGENOM" id="CLU_058591_0_2_14"/>
<dbReference type="PhylomeDB" id="P02353"/>
<dbReference type="Proteomes" id="UP000001928">
    <property type="component" value="Chromosome"/>
</dbReference>
<dbReference type="GO" id="GO:0022627">
    <property type="term" value="C:cytosolic small ribosomal subunit"/>
    <property type="evidence" value="ECO:0007669"/>
    <property type="project" value="TreeGrafter"/>
</dbReference>
<dbReference type="GO" id="GO:0003729">
    <property type="term" value="F:mRNA binding"/>
    <property type="evidence" value="ECO:0007669"/>
    <property type="project" value="UniProtKB-UniRule"/>
</dbReference>
<dbReference type="GO" id="GO:0019843">
    <property type="term" value="F:rRNA binding"/>
    <property type="evidence" value="ECO:0007669"/>
    <property type="project" value="UniProtKB-UniRule"/>
</dbReference>
<dbReference type="GO" id="GO:0003735">
    <property type="term" value="F:structural constituent of ribosome"/>
    <property type="evidence" value="ECO:0007669"/>
    <property type="project" value="InterPro"/>
</dbReference>
<dbReference type="GO" id="GO:0006412">
    <property type="term" value="P:translation"/>
    <property type="evidence" value="ECO:0007669"/>
    <property type="project" value="UniProtKB-UniRule"/>
</dbReference>
<dbReference type="CDD" id="cd02412">
    <property type="entry name" value="KH-II_30S_S3"/>
    <property type="match status" value="1"/>
</dbReference>
<dbReference type="FunFam" id="3.30.300.20:FF:000001">
    <property type="entry name" value="30S ribosomal protein S3"/>
    <property type="match status" value="1"/>
</dbReference>
<dbReference type="Gene3D" id="3.30.300.20">
    <property type="match status" value="1"/>
</dbReference>
<dbReference type="Gene3D" id="3.30.1140.32">
    <property type="entry name" value="Ribosomal protein S3, C-terminal domain"/>
    <property type="match status" value="1"/>
</dbReference>
<dbReference type="HAMAP" id="MF_01309_B">
    <property type="entry name" value="Ribosomal_uS3_B"/>
    <property type="match status" value="1"/>
</dbReference>
<dbReference type="InterPro" id="IPR004087">
    <property type="entry name" value="KH_dom"/>
</dbReference>
<dbReference type="InterPro" id="IPR015946">
    <property type="entry name" value="KH_dom-like_a/b"/>
</dbReference>
<dbReference type="InterPro" id="IPR004044">
    <property type="entry name" value="KH_dom_type_2"/>
</dbReference>
<dbReference type="InterPro" id="IPR009019">
    <property type="entry name" value="KH_sf_prok-type"/>
</dbReference>
<dbReference type="InterPro" id="IPR036419">
    <property type="entry name" value="Ribosomal_S3_C_sf"/>
</dbReference>
<dbReference type="InterPro" id="IPR005704">
    <property type="entry name" value="Ribosomal_uS3_bac-typ"/>
</dbReference>
<dbReference type="InterPro" id="IPR001351">
    <property type="entry name" value="Ribosomal_uS3_C"/>
</dbReference>
<dbReference type="InterPro" id="IPR018280">
    <property type="entry name" value="Ribosomal_uS3_CS"/>
</dbReference>
<dbReference type="NCBIfam" id="TIGR01009">
    <property type="entry name" value="rpsC_bact"/>
    <property type="match status" value="1"/>
</dbReference>
<dbReference type="PANTHER" id="PTHR11760">
    <property type="entry name" value="30S/40S RIBOSOMAL PROTEIN S3"/>
    <property type="match status" value="1"/>
</dbReference>
<dbReference type="PANTHER" id="PTHR11760:SF19">
    <property type="entry name" value="SMALL RIBOSOMAL SUBUNIT PROTEIN US3C"/>
    <property type="match status" value="1"/>
</dbReference>
<dbReference type="Pfam" id="PF07650">
    <property type="entry name" value="KH_2"/>
    <property type="match status" value="1"/>
</dbReference>
<dbReference type="Pfam" id="PF00189">
    <property type="entry name" value="Ribosomal_S3_C"/>
    <property type="match status" value="1"/>
</dbReference>
<dbReference type="SMART" id="SM00322">
    <property type="entry name" value="KH"/>
    <property type="match status" value="1"/>
</dbReference>
<dbReference type="SUPFAM" id="SSF54814">
    <property type="entry name" value="Prokaryotic type KH domain (KH-domain type II)"/>
    <property type="match status" value="1"/>
</dbReference>
<dbReference type="SUPFAM" id="SSF54821">
    <property type="entry name" value="Ribosomal protein S3 C-terminal domain"/>
    <property type="match status" value="1"/>
</dbReference>
<dbReference type="PROSITE" id="PS50823">
    <property type="entry name" value="KH_TYPE_2"/>
    <property type="match status" value="1"/>
</dbReference>
<dbReference type="PROSITE" id="PS00548">
    <property type="entry name" value="RIBOSOMAL_S3"/>
    <property type="match status" value="1"/>
</dbReference>
<gene>
    <name evidence="2" type="primary">rpsC</name>
    <name type="ordered locus">MCAP_0690</name>
</gene>
<keyword id="KW-0687">Ribonucleoprotein</keyword>
<keyword id="KW-0689">Ribosomal protein</keyword>
<keyword id="KW-0694">RNA-binding</keyword>
<keyword id="KW-0699">rRNA-binding</keyword>
<name>RS3_MYCCT</name>
<reference key="1">
    <citation type="journal article" date="1987" name="Mol. Gen. Genet.">
        <title>The ribosomal protein gene cluster of Mycoplasma capricolum.</title>
        <authorList>
            <person name="Ohkubo S."/>
            <person name="Muto A."/>
            <person name="Kawauchi Y."/>
            <person name="Yamao F."/>
            <person name="Osawa S."/>
        </authorList>
    </citation>
    <scope>NUCLEOTIDE SEQUENCE [GENOMIC DNA]</scope>
</reference>
<reference key="2">
    <citation type="journal article" date="1995" name="Mol. Microbiol.">
        <title>Exploring the Mycoplasma capricolum genome: a minimal cell reveals its physiology.</title>
        <authorList>
            <person name="Bork P."/>
            <person name="Ouzounis C."/>
            <person name="Casari G."/>
            <person name="Schneider R."/>
            <person name="Sander C."/>
            <person name="Dolan M."/>
            <person name="Gilbert W."/>
            <person name="Gillevet P.M."/>
        </authorList>
    </citation>
    <scope>NUCLEOTIDE SEQUENCE [GENOMIC DNA]</scope>
</reference>
<reference key="3">
    <citation type="submission" date="2005-09" db="EMBL/GenBank/DDBJ databases">
        <authorList>
            <person name="Glass J.I."/>
            <person name="Lartigue C."/>
            <person name="Pfannkoch C."/>
            <person name="Baden-Tillson H."/>
            <person name="Smith H.O."/>
            <person name="Venter J.C."/>
            <person name="Roske K."/>
            <person name="Wise K.S."/>
            <person name="Calcutt M.J."/>
            <person name="Nelson W.C."/>
            <person name="Nierman W.C."/>
        </authorList>
    </citation>
    <scope>NUCLEOTIDE SEQUENCE [LARGE SCALE GENOMIC DNA]</scope>
    <source>
        <strain>California kid / ATCC 27343 / NCTC 10154</strain>
    </source>
</reference>
<reference key="4">
    <citation type="journal article" date="1985" name="Proc. Natl. Acad. Sci. U.S.A.">
        <title>UGA is read as tryptophan in Mycoplasma capricolum.</title>
        <authorList>
            <person name="Yamao F."/>
            <person name="Muto A."/>
            <person name="Kawauchi Y."/>
            <person name="Iwami M."/>
            <person name="Iwagami S."/>
            <person name="Azumi Y."/>
            <person name="Osawa S."/>
        </authorList>
    </citation>
    <scope>NUCLEOTIDE SEQUENCE [GENOMIC DNA] OF 145-233</scope>
</reference>
<organism>
    <name type="scientific">Mycoplasma capricolum subsp. capricolum (strain California kid / ATCC 27343 / NCTC 10154)</name>
    <dbReference type="NCBI Taxonomy" id="340047"/>
    <lineage>
        <taxon>Bacteria</taxon>
        <taxon>Bacillati</taxon>
        <taxon>Mycoplasmatota</taxon>
        <taxon>Mollicutes</taxon>
        <taxon>Mycoplasmataceae</taxon>
        <taxon>Mycoplasma</taxon>
    </lineage>
</organism>
<accession>P02353</accession>
<accession>Q2SRF9</accession>
<protein>
    <recommendedName>
        <fullName evidence="2">Small ribosomal subunit protein uS3</fullName>
    </recommendedName>
    <alternativeName>
        <fullName evidence="3">30S ribosomal protein S3</fullName>
    </alternativeName>
</protein>